<dbReference type="EC" id="6.1.1.19" evidence="1"/>
<dbReference type="EMBL" id="BX251411">
    <property type="protein sequence ID" value="CAD67089.1"/>
    <property type="molecule type" value="Genomic_DNA"/>
</dbReference>
<dbReference type="SMR" id="Q83HT0"/>
<dbReference type="KEGG" id="tws:TW419"/>
<dbReference type="HOGENOM" id="CLU_006406_0_1_11"/>
<dbReference type="GO" id="GO:0005737">
    <property type="term" value="C:cytoplasm"/>
    <property type="evidence" value="ECO:0007669"/>
    <property type="project" value="UniProtKB-SubCell"/>
</dbReference>
<dbReference type="GO" id="GO:0004814">
    <property type="term" value="F:arginine-tRNA ligase activity"/>
    <property type="evidence" value="ECO:0007669"/>
    <property type="project" value="UniProtKB-UniRule"/>
</dbReference>
<dbReference type="GO" id="GO:0005524">
    <property type="term" value="F:ATP binding"/>
    <property type="evidence" value="ECO:0007669"/>
    <property type="project" value="UniProtKB-UniRule"/>
</dbReference>
<dbReference type="GO" id="GO:0006420">
    <property type="term" value="P:arginyl-tRNA aminoacylation"/>
    <property type="evidence" value="ECO:0007669"/>
    <property type="project" value="UniProtKB-UniRule"/>
</dbReference>
<dbReference type="CDD" id="cd00671">
    <property type="entry name" value="ArgRS_core"/>
    <property type="match status" value="1"/>
</dbReference>
<dbReference type="FunFam" id="1.10.730.10:FF:000008">
    <property type="entry name" value="Arginine--tRNA ligase"/>
    <property type="match status" value="1"/>
</dbReference>
<dbReference type="Gene3D" id="3.30.1360.70">
    <property type="entry name" value="Arginyl tRNA synthetase N-terminal domain"/>
    <property type="match status" value="1"/>
</dbReference>
<dbReference type="Gene3D" id="3.40.50.620">
    <property type="entry name" value="HUPs"/>
    <property type="match status" value="1"/>
</dbReference>
<dbReference type="Gene3D" id="1.10.730.10">
    <property type="entry name" value="Isoleucyl-tRNA Synthetase, Domain 1"/>
    <property type="match status" value="1"/>
</dbReference>
<dbReference type="HAMAP" id="MF_00123">
    <property type="entry name" value="Arg_tRNA_synth"/>
    <property type="match status" value="1"/>
</dbReference>
<dbReference type="InterPro" id="IPR001278">
    <property type="entry name" value="Arg-tRNA-ligase"/>
</dbReference>
<dbReference type="InterPro" id="IPR005148">
    <property type="entry name" value="Arg-tRNA-synth_N"/>
</dbReference>
<dbReference type="InterPro" id="IPR036695">
    <property type="entry name" value="Arg-tRNA-synth_N_sf"/>
</dbReference>
<dbReference type="InterPro" id="IPR035684">
    <property type="entry name" value="ArgRS_core"/>
</dbReference>
<dbReference type="InterPro" id="IPR008909">
    <property type="entry name" value="DALR_anticod-bd"/>
</dbReference>
<dbReference type="InterPro" id="IPR014729">
    <property type="entry name" value="Rossmann-like_a/b/a_fold"/>
</dbReference>
<dbReference type="InterPro" id="IPR009080">
    <property type="entry name" value="tRNAsynth_Ia_anticodon-bd"/>
</dbReference>
<dbReference type="NCBIfam" id="TIGR00456">
    <property type="entry name" value="argS"/>
    <property type="match status" value="1"/>
</dbReference>
<dbReference type="PANTHER" id="PTHR11956:SF5">
    <property type="entry name" value="ARGININE--TRNA LIGASE, CYTOPLASMIC"/>
    <property type="match status" value="1"/>
</dbReference>
<dbReference type="PANTHER" id="PTHR11956">
    <property type="entry name" value="ARGINYL-TRNA SYNTHETASE"/>
    <property type="match status" value="1"/>
</dbReference>
<dbReference type="Pfam" id="PF03485">
    <property type="entry name" value="Arg_tRNA_synt_N"/>
    <property type="match status" value="1"/>
</dbReference>
<dbReference type="Pfam" id="PF05746">
    <property type="entry name" value="DALR_1"/>
    <property type="match status" value="1"/>
</dbReference>
<dbReference type="Pfam" id="PF00750">
    <property type="entry name" value="tRNA-synt_1d"/>
    <property type="match status" value="1"/>
</dbReference>
<dbReference type="PRINTS" id="PR01038">
    <property type="entry name" value="TRNASYNTHARG"/>
</dbReference>
<dbReference type="SMART" id="SM01016">
    <property type="entry name" value="Arg_tRNA_synt_N"/>
    <property type="match status" value="1"/>
</dbReference>
<dbReference type="SMART" id="SM00836">
    <property type="entry name" value="DALR_1"/>
    <property type="match status" value="1"/>
</dbReference>
<dbReference type="SUPFAM" id="SSF47323">
    <property type="entry name" value="Anticodon-binding domain of a subclass of class I aminoacyl-tRNA synthetases"/>
    <property type="match status" value="1"/>
</dbReference>
<dbReference type="SUPFAM" id="SSF55190">
    <property type="entry name" value="Arginyl-tRNA synthetase (ArgRS), N-terminal 'additional' domain"/>
    <property type="match status" value="1"/>
</dbReference>
<dbReference type="SUPFAM" id="SSF52374">
    <property type="entry name" value="Nucleotidylyl transferase"/>
    <property type="match status" value="1"/>
</dbReference>
<protein>
    <recommendedName>
        <fullName evidence="1">Arginine--tRNA ligase</fullName>
        <ecNumber evidence="1">6.1.1.19</ecNumber>
    </recommendedName>
    <alternativeName>
        <fullName evidence="1">Arginyl-tRNA synthetase</fullName>
        <shortName evidence="1">ArgRS</shortName>
    </alternativeName>
</protein>
<accession>Q83HT0</accession>
<keyword id="KW-0030">Aminoacyl-tRNA synthetase</keyword>
<keyword id="KW-0067">ATP-binding</keyword>
<keyword id="KW-0963">Cytoplasm</keyword>
<keyword id="KW-0436">Ligase</keyword>
<keyword id="KW-0547">Nucleotide-binding</keyword>
<keyword id="KW-0648">Protein biosynthesis</keyword>
<evidence type="ECO:0000255" key="1">
    <source>
        <dbReference type="HAMAP-Rule" id="MF_00123"/>
    </source>
</evidence>
<gene>
    <name evidence="1" type="primary">argS</name>
    <name type="ordered locus">TW419</name>
</gene>
<proteinExistence type="inferred from homology"/>
<organism>
    <name type="scientific">Tropheryma whipplei (strain TW08/27)</name>
    <name type="common">Whipple's bacillus</name>
    <dbReference type="NCBI Taxonomy" id="218496"/>
    <lineage>
        <taxon>Bacteria</taxon>
        <taxon>Bacillati</taxon>
        <taxon>Actinomycetota</taxon>
        <taxon>Actinomycetes</taxon>
        <taxon>Micrococcales</taxon>
        <taxon>Tropherymataceae</taxon>
        <taxon>Tropheryma</taxon>
    </lineage>
</organism>
<sequence>MEDLKKSVTNIVHSMYNFDCSEIVSLTRPPKPEYGDWALSLPLKLASLLKSPAIDIAQSIASALLELDGVQDVYVAKPGFINLKLSREHTTGIISEVLEQGSSFGRNTTQSSKKINLEFVSGNPTGPLHLAHTRWAAVGDSIARILINCGADVTREYYINNVGNQIHLFSESVYARALSKSLPKDGYPGEYVKDIARRIQCEFPNIIDLSYEDAIKIFRKRSWQIQIEEIKKSCIAFRVNFDVWFSEESLHEPDRFGKSQIDKALARCKQNGYLFQKNGAFFIRTTEFGDDKDRAVLRSDTSYTYYAADCAYYLNKINRGFSDLVILVGADHHGYVKRFQAMSNIFHVDSENNRKNVQVLLGQMVSLKNKRQSKREGNVIGLSEIIQSVGVDPLRFWFCRYPIDTPIDLDEQHLKKRSNDNPVYYVQYAYARTRSLIRSANLLQMEKFGFFPELLVHETETALVSLLYDYKTVVIDAARFLQPHRVVRYLESLAGAYHKWYDKCRIIPRKGILDKSEAELVNTRLELNRAVGQVLYNALDLIGVSAPERM</sequence>
<reference key="1">
    <citation type="journal article" date="2003" name="Lancet">
        <title>Sequencing and analysis of the genome of the Whipple's disease bacterium Tropheryma whipplei.</title>
        <authorList>
            <person name="Bentley S.D."/>
            <person name="Maiwald M."/>
            <person name="Murphy L.D."/>
            <person name="Pallen M.J."/>
            <person name="Yeats C.A."/>
            <person name="Dover L.G."/>
            <person name="Norbertczak H.T."/>
            <person name="Besra G.S."/>
            <person name="Quail M.A."/>
            <person name="Harris D.E."/>
            <person name="von Herbay A."/>
            <person name="Goble A."/>
            <person name="Rutter S."/>
            <person name="Squares R."/>
            <person name="Squares S."/>
            <person name="Barrell B.G."/>
            <person name="Parkhill J."/>
            <person name="Relman D.A."/>
        </authorList>
    </citation>
    <scope>NUCLEOTIDE SEQUENCE [LARGE SCALE GENOMIC DNA]</scope>
    <source>
        <strain>TW08/27</strain>
    </source>
</reference>
<comment type="catalytic activity">
    <reaction evidence="1">
        <text>tRNA(Arg) + L-arginine + ATP = L-arginyl-tRNA(Arg) + AMP + diphosphate</text>
        <dbReference type="Rhea" id="RHEA:20301"/>
        <dbReference type="Rhea" id="RHEA-COMP:9658"/>
        <dbReference type="Rhea" id="RHEA-COMP:9673"/>
        <dbReference type="ChEBI" id="CHEBI:30616"/>
        <dbReference type="ChEBI" id="CHEBI:32682"/>
        <dbReference type="ChEBI" id="CHEBI:33019"/>
        <dbReference type="ChEBI" id="CHEBI:78442"/>
        <dbReference type="ChEBI" id="CHEBI:78513"/>
        <dbReference type="ChEBI" id="CHEBI:456215"/>
        <dbReference type="EC" id="6.1.1.19"/>
    </reaction>
</comment>
<comment type="subunit">
    <text evidence="1">Monomer.</text>
</comment>
<comment type="subcellular location">
    <subcellularLocation>
        <location evidence="1">Cytoplasm</location>
    </subcellularLocation>
</comment>
<comment type="similarity">
    <text evidence="1">Belongs to the class-I aminoacyl-tRNA synthetase family.</text>
</comment>
<name>SYR_TROW8</name>
<feature type="chain" id="PRO_0000242117" description="Arginine--tRNA ligase">
    <location>
        <begin position="1"/>
        <end position="550"/>
    </location>
</feature>
<feature type="short sequence motif" description="'HIGH' region">
    <location>
        <begin position="122"/>
        <end position="132"/>
    </location>
</feature>